<name>VG80_BPML5</name>
<organism>
    <name type="scientific">Mycobacterium phage L5</name>
    <name type="common">Mycobacteriophage L5</name>
    <dbReference type="NCBI Taxonomy" id="31757"/>
    <lineage>
        <taxon>Viruses</taxon>
        <taxon>Duplodnaviria</taxon>
        <taxon>Heunggongvirae</taxon>
        <taxon>Uroviricota</taxon>
        <taxon>Caudoviricetes</taxon>
        <taxon>Fromanvirus</taxon>
    </lineage>
</organism>
<organismHost>
    <name type="scientific">Mycobacterium</name>
    <dbReference type="NCBI Taxonomy" id="1763"/>
</organismHost>
<reference key="1">
    <citation type="journal article" date="1993" name="Mol. Microbiol.">
        <title>DNA sequence, structure and gene expression of mycobacteriophage L5: a phage system for mycobacterial genetics.</title>
        <authorList>
            <person name="Hatfull G.F."/>
            <person name="Sarkis G.J."/>
        </authorList>
    </citation>
    <scope>NUCLEOTIDE SEQUENCE [LARGE SCALE GENOMIC DNA]</scope>
</reference>
<proteinExistence type="predicted"/>
<feature type="chain" id="PRO_0000164823" description="Gene 80 protein">
    <location>
        <begin position="1"/>
        <end position="92"/>
    </location>
</feature>
<accession>Q05295</accession>
<protein>
    <recommendedName>
        <fullName>Gene 80 protein</fullName>
    </recommendedName>
    <alternativeName>
        <fullName>Gp80</fullName>
    </alternativeName>
</protein>
<gene>
    <name type="primary">80</name>
</gene>
<keyword id="KW-1185">Reference proteome</keyword>
<sequence>MTTRGAVIQAAHYAETEARLQRDHIIVTMSVEMNRALPAEKASWVHEDGSPRFHFMQAANREYSRRGGKGGGHIGAVANALLANLKILEGDE</sequence>
<dbReference type="EMBL" id="Z18946">
    <property type="protein sequence ID" value="CAA79456.1"/>
    <property type="molecule type" value="Genomic_DNA"/>
</dbReference>
<dbReference type="PIR" id="S31025">
    <property type="entry name" value="S31025"/>
</dbReference>
<dbReference type="RefSeq" id="NP_039744.1">
    <property type="nucleotide sequence ID" value="NC_001335.1"/>
</dbReference>
<dbReference type="GeneID" id="2942911"/>
<dbReference type="KEGG" id="vg:2942911"/>
<dbReference type="OrthoDB" id="24096at10239"/>
<dbReference type="Proteomes" id="UP000002123">
    <property type="component" value="Genome"/>
</dbReference>